<sequence length="127" mass="14365">MRHRKSGRQLNRNSSHRQAMFRNMAGSLVRHEIIKTTLPKAKELRRVVEPLITLAKTDSVANRRLAFARTRDNEIVAKLFNELGPRFASRAGGYTRILKCGFRAGDNAPMAYIELVDRSEKAEAAAE</sequence>
<evidence type="ECO:0000255" key="1">
    <source>
        <dbReference type="HAMAP-Rule" id="MF_01368"/>
    </source>
</evidence>
<evidence type="ECO:0000305" key="2"/>
<accession>B7LRR1</accession>
<reference key="1">
    <citation type="journal article" date="2009" name="PLoS Genet.">
        <title>Organised genome dynamics in the Escherichia coli species results in highly diverse adaptive paths.</title>
        <authorList>
            <person name="Touchon M."/>
            <person name="Hoede C."/>
            <person name="Tenaillon O."/>
            <person name="Barbe V."/>
            <person name="Baeriswyl S."/>
            <person name="Bidet P."/>
            <person name="Bingen E."/>
            <person name="Bonacorsi S."/>
            <person name="Bouchier C."/>
            <person name="Bouvet O."/>
            <person name="Calteau A."/>
            <person name="Chiapello H."/>
            <person name="Clermont O."/>
            <person name="Cruveiller S."/>
            <person name="Danchin A."/>
            <person name="Diard M."/>
            <person name="Dossat C."/>
            <person name="Karoui M.E."/>
            <person name="Frapy E."/>
            <person name="Garry L."/>
            <person name="Ghigo J.M."/>
            <person name="Gilles A.M."/>
            <person name="Johnson J."/>
            <person name="Le Bouguenec C."/>
            <person name="Lescat M."/>
            <person name="Mangenot S."/>
            <person name="Martinez-Jehanne V."/>
            <person name="Matic I."/>
            <person name="Nassif X."/>
            <person name="Oztas S."/>
            <person name="Petit M.A."/>
            <person name="Pichon C."/>
            <person name="Rouy Z."/>
            <person name="Ruf C.S."/>
            <person name="Schneider D."/>
            <person name="Tourret J."/>
            <person name="Vacherie B."/>
            <person name="Vallenet D."/>
            <person name="Medigue C."/>
            <person name="Rocha E.P.C."/>
            <person name="Denamur E."/>
        </authorList>
    </citation>
    <scope>NUCLEOTIDE SEQUENCE [LARGE SCALE GENOMIC DNA]</scope>
    <source>
        <strain>ATCC 35469 / DSM 13698 / BCRC 15582 / CCUG 18766 / IAM 14443 / JCM 21226 / LMG 7866 / NBRC 102419 / NCTC 12128 / CDC 0568-73</strain>
    </source>
</reference>
<proteinExistence type="inferred from homology"/>
<comment type="subunit">
    <text evidence="1">Part of the 50S ribosomal subunit. Contacts protein L32.</text>
</comment>
<comment type="similarity">
    <text evidence="1">Belongs to the bacterial ribosomal protein bL17 family.</text>
</comment>
<dbReference type="EMBL" id="CU928158">
    <property type="protein sequence ID" value="CAQ90758.1"/>
    <property type="molecule type" value="Genomic_DNA"/>
</dbReference>
<dbReference type="RefSeq" id="WP_001216368.1">
    <property type="nucleotide sequence ID" value="NC_011740.1"/>
</dbReference>
<dbReference type="SMR" id="B7LRR1"/>
<dbReference type="GeneID" id="97442834"/>
<dbReference type="KEGG" id="efe:EFER_3278"/>
<dbReference type="HOGENOM" id="CLU_074407_2_0_6"/>
<dbReference type="OrthoDB" id="9809073at2"/>
<dbReference type="Proteomes" id="UP000000745">
    <property type="component" value="Chromosome"/>
</dbReference>
<dbReference type="GO" id="GO:0022625">
    <property type="term" value="C:cytosolic large ribosomal subunit"/>
    <property type="evidence" value="ECO:0007669"/>
    <property type="project" value="TreeGrafter"/>
</dbReference>
<dbReference type="GO" id="GO:0003735">
    <property type="term" value="F:structural constituent of ribosome"/>
    <property type="evidence" value="ECO:0007669"/>
    <property type="project" value="InterPro"/>
</dbReference>
<dbReference type="GO" id="GO:0006412">
    <property type="term" value="P:translation"/>
    <property type="evidence" value="ECO:0007669"/>
    <property type="project" value="UniProtKB-UniRule"/>
</dbReference>
<dbReference type="FunFam" id="3.90.1030.10:FF:000001">
    <property type="entry name" value="50S ribosomal protein L17"/>
    <property type="match status" value="1"/>
</dbReference>
<dbReference type="Gene3D" id="3.90.1030.10">
    <property type="entry name" value="Ribosomal protein L17"/>
    <property type="match status" value="1"/>
</dbReference>
<dbReference type="HAMAP" id="MF_01368">
    <property type="entry name" value="Ribosomal_bL17"/>
    <property type="match status" value="1"/>
</dbReference>
<dbReference type="InterPro" id="IPR000456">
    <property type="entry name" value="Ribosomal_bL17"/>
</dbReference>
<dbReference type="InterPro" id="IPR047859">
    <property type="entry name" value="Ribosomal_bL17_CS"/>
</dbReference>
<dbReference type="InterPro" id="IPR036373">
    <property type="entry name" value="Ribosomal_bL17_sf"/>
</dbReference>
<dbReference type="NCBIfam" id="TIGR00059">
    <property type="entry name" value="L17"/>
    <property type="match status" value="1"/>
</dbReference>
<dbReference type="PANTHER" id="PTHR14413:SF16">
    <property type="entry name" value="LARGE RIBOSOMAL SUBUNIT PROTEIN BL17M"/>
    <property type="match status" value="1"/>
</dbReference>
<dbReference type="PANTHER" id="PTHR14413">
    <property type="entry name" value="RIBOSOMAL PROTEIN L17"/>
    <property type="match status" value="1"/>
</dbReference>
<dbReference type="Pfam" id="PF01196">
    <property type="entry name" value="Ribosomal_L17"/>
    <property type="match status" value="1"/>
</dbReference>
<dbReference type="SUPFAM" id="SSF64263">
    <property type="entry name" value="Prokaryotic ribosomal protein L17"/>
    <property type="match status" value="1"/>
</dbReference>
<dbReference type="PROSITE" id="PS01167">
    <property type="entry name" value="RIBOSOMAL_L17"/>
    <property type="match status" value="1"/>
</dbReference>
<gene>
    <name evidence="1" type="primary">rplQ</name>
    <name type="ordered locus">EFER_3278</name>
</gene>
<name>RL17_ESCF3</name>
<protein>
    <recommendedName>
        <fullName evidence="1">Large ribosomal subunit protein bL17</fullName>
    </recommendedName>
    <alternativeName>
        <fullName evidence="2">50S ribosomal protein L17</fullName>
    </alternativeName>
</protein>
<keyword id="KW-0687">Ribonucleoprotein</keyword>
<keyword id="KW-0689">Ribosomal protein</keyword>
<feature type="chain" id="PRO_1000144426" description="Large ribosomal subunit protein bL17">
    <location>
        <begin position="1"/>
        <end position="127"/>
    </location>
</feature>
<organism>
    <name type="scientific">Escherichia fergusonii (strain ATCC 35469 / DSM 13698 / CCUG 18766 / IAM 14443 / JCM 21226 / LMG 7866 / NBRC 102419 / NCTC 12128 / CDC 0568-73)</name>
    <dbReference type="NCBI Taxonomy" id="585054"/>
    <lineage>
        <taxon>Bacteria</taxon>
        <taxon>Pseudomonadati</taxon>
        <taxon>Pseudomonadota</taxon>
        <taxon>Gammaproteobacteria</taxon>
        <taxon>Enterobacterales</taxon>
        <taxon>Enterobacteriaceae</taxon>
        <taxon>Escherichia</taxon>
    </lineage>
</organism>